<feature type="chain" id="PRO_1000090902" description="Ribonuclease H">
    <location>
        <begin position="1"/>
        <end position="152"/>
    </location>
</feature>
<feature type="domain" description="RNase H type-1" evidence="2">
    <location>
        <begin position="6"/>
        <end position="147"/>
    </location>
</feature>
<feature type="binding site" evidence="1">
    <location>
        <position position="15"/>
    </location>
    <ligand>
        <name>Mg(2+)</name>
        <dbReference type="ChEBI" id="CHEBI:18420"/>
        <label>1</label>
    </ligand>
</feature>
<feature type="binding site" evidence="1">
    <location>
        <position position="15"/>
    </location>
    <ligand>
        <name>Mg(2+)</name>
        <dbReference type="ChEBI" id="CHEBI:18420"/>
        <label>2</label>
    </ligand>
</feature>
<feature type="binding site" evidence="1">
    <location>
        <position position="53"/>
    </location>
    <ligand>
        <name>Mg(2+)</name>
        <dbReference type="ChEBI" id="CHEBI:18420"/>
        <label>1</label>
    </ligand>
</feature>
<feature type="binding site" evidence="1">
    <location>
        <position position="75"/>
    </location>
    <ligand>
        <name>Mg(2+)</name>
        <dbReference type="ChEBI" id="CHEBI:18420"/>
        <label>1</label>
    </ligand>
</feature>
<feature type="binding site" evidence="1">
    <location>
        <position position="139"/>
    </location>
    <ligand>
        <name>Mg(2+)</name>
        <dbReference type="ChEBI" id="CHEBI:18420"/>
        <label>2</label>
    </ligand>
</feature>
<reference key="1">
    <citation type="journal article" date="2009" name="PLoS Pathog.">
        <title>Molecular evolutionary consequences of niche restriction in Francisella tularensis, a facultative intracellular pathogen.</title>
        <authorList>
            <person name="Larsson P."/>
            <person name="Elfsmark D."/>
            <person name="Svensson K."/>
            <person name="Wikstroem P."/>
            <person name="Forsman M."/>
            <person name="Brettin T."/>
            <person name="Keim P."/>
            <person name="Johansson A."/>
        </authorList>
    </citation>
    <scope>NUCLEOTIDE SEQUENCE [LARGE SCALE GENOMIC DNA]</scope>
    <source>
        <strain>FSC147</strain>
    </source>
</reference>
<keyword id="KW-0963">Cytoplasm</keyword>
<keyword id="KW-0255">Endonuclease</keyword>
<keyword id="KW-0378">Hydrolase</keyword>
<keyword id="KW-0460">Magnesium</keyword>
<keyword id="KW-0479">Metal-binding</keyword>
<keyword id="KW-0540">Nuclease</keyword>
<protein>
    <recommendedName>
        <fullName evidence="1">Ribonuclease H</fullName>
        <shortName evidence="1">RNase H</shortName>
        <ecNumber evidence="1">3.1.26.4</ecNumber>
    </recommendedName>
</protein>
<sequence length="152" mass="16976">MEIFKKKNRVIAYTDGACKGNPGIGGWGAILSYNGVDKEIYGSEKDTTNNRMELMAAIKTLQALKRKCDITIYTDSKYLQNGINEWLANWKANGWKTAAKKEVKNKDLWQELDSLTNKHNVTWGWVKGHSGNAGNEKADELANKAIAELIGK</sequence>
<proteinExistence type="inferred from homology"/>
<organism>
    <name type="scientific">Francisella tularensis subsp. mediasiatica (strain FSC147)</name>
    <dbReference type="NCBI Taxonomy" id="441952"/>
    <lineage>
        <taxon>Bacteria</taxon>
        <taxon>Pseudomonadati</taxon>
        <taxon>Pseudomonadota</taxon>
        <taxon>Gammaproteobacteria</taxon>
        <taxon>Thiotrichales</taxon>
        <taxon>Francisellaceae</taxon>
        <taxon>Francisella</taxon>
    </lineage>
</organism>
<accession>B2SFV9</accession>
<name>RNH_FRATM</name>
<dbReference type="EC" id="3.1.26.4" evidence="1"/>
<dbReference type="EMBL" id="CP000915">
    <property type="protein sequence ID" value="ACD30648.1"/>
    <property type="molecule type" value="Genomic_DNA"/>
</dbReference>
<dbReference type="SMR" id="B2SFV9"/>
<dbReference type="KEGG" id="ftm:FTM_0665"/>
<dbReference type="HOGENOM" id="CLU_030894_6_0_6"/>
<dbReference type="GO" id="GO:0005737">
    <property type="term" value="C:cytoplasm"/>
    <property type="evidence" value="ECO:0007669"/>
    <property type="project" value="UniProtKB-SubCell"/>
</dbReference>
<dbReference type="GO" id="GO:0000287">
    <property type="term" value="F:magnesium ion binding"/>
    <property type="evidence" value="ECO:0007669"/>
    <property type="project" value="UniProtKB-UniRule"/>
</dbReference>
<dbReference type="GO" id="GO:0003676">
    <property type="term" value="F:nucleic acid binding"/>
    <property type="evidence" value="ECO:0007669"/>
    <property type="project" value="InterPro"/>
</dbReference>
<dbReference type="GO" id="GO:0004523">
    <property type="term" value="F:RNA-DNA hybrid ribonuclease activity"/>
    <property type="evidence" value="ECO:0007669"/>
    <property type="project" value="UniProtKB-UniRule"/>
</dbReference>
<dbReference type="GO" id="GO:0043137">
    <property type="term" value="P:DNA replication, removal of RNA primer"/>
    <property type="evidence" value="ECO:0007669"/>
    <property type="project" value="TreeGrafter"/>
</dbReference>
<dbReference type="CDD" id="cd09278">
    <property type="entry name" value="RNase_HI_prokaryote_like"/>
    <property type="match status" value="1"/>
</dbReference>
<dbReference type="FunFam" id="3.30.420.10:FF:000089">
    <property type="entry name" value="Ribonuclease H"/>
    <property type="match status" value="1"/>
</dbReference>
<dbReference type="Gene3D" id="3.30.420.10">
    <property type="entry name" value="Ribonuclease H-like superfamily/Ribonuclease H"/>
    <property type="match status" value="1"/>
</dbReference>
<dbReference type="HAMAP" id="MF_00042">
    <property type="entry name" value="RNase_H"/>
    <property type="match status" value="1"/>
</dbReference>
<dbReference type="InterPro" id="IPR050092">
    <property type="entry name" value="RNase_H"/>
</dbReference>
<dbReference type="InterPro" id="IPR012337">
    <property type="entry name" value="RNaseH-like_sf"/>
</dbReference>
<dbReference type="InterPro" id="IPR002156">
    <property type="entry name" value="RNaseH_domain"/>
</dbReference>
<dbReference type="InterPro" id="IPR036397">
    <property type="entry name" value="RNaseH_sf"/>
</dbReference>
<dbReference type="InterPro" id="IPR022892">
    <property type="entry name" value="RNaseHI"/>
</dbReference>
<dbReference type="NCBIfam" id="NF001236">
    <property type="entry name" value="PRK00203.1"/>
    <property type="match status" value="1"/>
</dbReference>
<dbReference type="PANTHER" id="PTHR10642">
    <property type="entry name" value="RIBONUCLEASE H1"/>
    <property type="match status" value="1"/>
</dbReference>
<dbReference type="PANTHER" id="PTHR10642:SF26">
    <property type="entry name" value="RIBONUCLEASE H1"/>
    <property type="match status" value="1"/>
</dbReference>
<dbReference type="Pfam" id="PF00075">
    <property type="entry name" value="RNase_H"/>
    <property type="match status" value="1"/>
</dbReference>
<dbReference type="SUPFAM" id="SSF53098">
    <property type="entry name" value="Ribonuclease H-like"/>
    <property type="match status" value="1"/>
</dbReference>
<dbReference type="PROSITE" id="PS50879">
    <property type="entry name" value="RNASE_H_1"/>
    <property type="match status" value="1"/>
</dbReference>
<evidence type="ECO:0000255" key="1">
    <source>
        <dbReference type="HAMAP-Rule" id="MF_00042"/>
    </source>
</evidence>
<evidence type="ECO:0000255" key="2">
    <source>
        <dbReference type="PROSITE-ProRule" id="PRU00408"/>
    </source>
</evidence>
<gene>
    <name evidence="1" type="primary">rnhA</name>
    <name type="ordered locus">FTM_0665</name>
</gene>
<comment type="function">
    <text evidence="1">Endonuclease that specifically degrades the RNA of RNA-DNA hybrids.</text>
</comment>
<comment type="catalytic activity">
    <reaction evidence="1">
        <text>Endonucleolytic cleavage to 5'-phosphomonoester.</text>
        <dbReference type="EC" id="3.1.26.4"/>
    </reaction>
</comment>
<comment type="cofactor">
    <cofactor evidence="1">
        <name>Mg(2+)</name>
        <dbReference type="ChEBI" id="CHEBI:18420"/>
    </cofactor>
    <text evidence="1">Binds 1 Mg(2+) ion per subunit. May bind a second metal ion at a regulatory site, or after substrate binding.</text>
</comment>
<comment type="subunit">
    <text evidence="1">Monomer.</text>
</comment>
<comment type="subcellular location">
    <subcellularLocation>
        <location evidence="1">Cytoplasm</location>
    </subcellularLocation>
</comment>
<comment type="similarity">
    <text evidence="1">Belongs to the RNase H family.</text>
</comment>